<reference key="1">
    <citation type="submission" date="2008-04" db="EMBL/GenBank/DDBJ databases">
        <title>Complete sequence of chromosome of Exiguobacterium sibiricum 255-15.</title>
        <authorList>
            <consortium name="US DOE Joint Genome Institute"/>
            <person name="Copeland A."/>
            <person name="Lucas S."/>
            <person name="Lapidus A."/>
            <person name="Glavina del Rio T."/>
            <person name="Dalin E."/>
            <person name="Tice H."/>
            <person name="Bruce D."/>
            <person name="Goodwin L."/>
            <person name="Pitluck S."/>
            <person name="Kiss H."/>
            <person name="Chertkov O."/>
            <person name="Monk C."/>
            <person name="Brettin T."/>
            <person name="Detter J.C."/>
            <person name="Han C."/>
            <person name="Kuske C.R."/>
            <person name="Schmutz J."/>
            <person name="Larimer F."/>
            <person name="Land M."/>
            <person name="Hauser L."/>
            <person name="Kyrpides N."/>
            <person name="Mikhailova N."/>
            <person name="Vishnivetskaya T."/>
            <person name="Rodrigues D.F."/>
            <person name="Gilichinsky D."/>
            <person name="Tiedje J."/>
            <person name="Richardson P."/>
        </authorList>
    </citation>
    <scope>NUCLEOTIDE SEQUENCE [LARGE SCALE GENOMIC DNA]</scope>
    <source>
        <strain>DSM 17290 / CCUG 55495 / CIP 109462 / JCM 13490 / 255-15</strain>
    </source>
</reference>
<feature type="chain" id="PRO_1000088972" description="Adenine phosphoribosyltransferase">
    <location>
        <begin position="1"/>
        <end position="172"/>
    </location>
</feature>
<gene>
    <name evidence="1" type="primary">apt</name>
    <name type="ordered locus">Exig_2090</name>
</gene>
<name>APT_EXIS2</name>
<keyword id="KW-0963">Cytoplasm</keyword>
<keyword id="KW-0328">Glycosyltransferase</keyword>
<keyword id="KW-0660">Purine salvage</keyword>
<keyword id="KW-1185">Reference proteome</keyword>
<keyword id="KW-0808">Transferase</keyword>
<proteinExistence type="inferred from homology"/>
<dbReference type="EC" id="2.4.2.7" evidence="1"/>
<dbReference type="EMBL" id="CP001022">
    <property type="protein sequence ID" value="ACB61542.1"/>
    <property type="molecule type" value="Genomic_DNA"/>
</dbReference>
<dbReference type="RefSeq" id="WP_012370959.1">
    <property type="nucleotide sequence ID" value="NC_010556.1"/>
</dbReference>
<dbReference type="SMR" id="B1YJG1"/>
<dbReference type="STRING" id="262543.Exig_2090"/>
<dbReference type="KEGG" id="esi:Exig_2090"/>
<dbReference type="eggNOG" id="COG0503">
    <property type="taxonomic scope" value="Bacteria"/>
</dbReference>
<dbReference type="HOGENOM" id="CLU_063339_3_0_9"/>
<dbReference type="OrthoDB" id="9803963at2"/>
<dbReference type="UniPathway" id="UPA00588">
    <property type="reaction ID" value="UER00646"/>
</dbReference>
<dbReference type="Proteomes" id="UP000001681">
    <property type="component" value="Chromosome"/>
</dbReference>
<dbReference type="GO" id="GO:0005737">
    <property type="term" value="C:cytoplasm"/>
    <property type="evidence" value="ECO:0007669"/>
    <property type="project" value="UniProtKB-SubCell"/>
</dbReference>
<dbReference type="GO" id="GO:0002055">
    <property type="term" value="F:adenine binding"/>
    <property type="evidence" value="ECO:0007669"/>
    <property type="project" value="TreeGrafter"/>
</dbReference>
<dbReference type="GO" id="GO:0003999">
    <property type="term" value="F:adenine phosphoribosyltransferase activity"/>
    <property type="evidence" value="ECO:0007669"/>
    <property type="project" value="UniProtKB-UniRule"/>
</dbReference>
<dbReference type="GO" id="GO:0016208">
    <property type="term" value="F:AMP binding"/>
    <property type="evidence" value="ECO:0007669"/>
    <property type="project" value="TreeGrafter"/>
</dbReference>
<dbReference type="GO" id="GO:0006168">
    <property type="term" value="P:adenine salvage"/>
    <property type="evidence" value="ECO:0007669"/>
    <property type="project" value="InterPro"/>
</dbReference>
<dbReference type="GO" id="GO:0044209">
    <property type="term" value="P:AMP salvage"/>
    <property type="evidence" value="ECO:0007669"/>
    <property type="project" value="UniProtKB-UniRule"/>
</dbReference>
<dbReference type="GO" id="GO:0006166">
    <property type="term" value="P:purine ribonucleoside salvage"/>
    <property type="evidence" value="ECO:0007669"/>
    <property type="project" value="UniProtKB-KW"/>
</dbReference>
<dbReference type="CDD" id="cd06223">
    <property type="entry name" value="PRTases_typeI"/>
    <property type="match status" value="1"/>
</dbReference>
<dbReference type="FunFam" id="3.40.50.2020:FF:000004">
    <property type="entry name" value="Adenine phosphoribosyltransferase"/>
    <property type="match status" value="1"/>
</dbReference>
<dbReference type="Gene3D" id="3.40.50.2020">
    <property type="match status" value="1"/>
</dbReference>
<dbReference type="HAMAP" id="MF_00004">
    <property type="entry name" value="Aden_phosphoribosyltr"/>
    <property type="match status" value="1"/>
</dbReference>
<dbReference type="InterPro" id="IPR005764">
    <property type="entry name" value="Ade_phspho_trans"/>
</dbReference>
<dbReference type="InterPro" id="IPR000836">
    <property type="entry name" value="PRibTrfase_dom"/>
</dbReference>
<dbReference type="InterPro" id="IPR029057">
    <property type="entry name" value="PRTase-like"/>
</dbReference>
<dbReference type="InterPro" id="IPR050054">
    <property type="entry name" value="UPRTase/APRTase"/>
</dbReference>
<dbReference type="NCBIfam" id="TIGR01090">
    <property type="entry name" value="apt"/>
    <property type="match status" value="1"/>
</dbReference>
<dbReference type="NCBIfam" id="NF002633">
    <property type="entry name" value="PRK02304.1-2"/>
    <property type="match status" value="1"/>
</dbReference>
<dbReference type="NCBIfam" id="NF002634">
    <property type="entry name" value="PRK02304.1-3"/>
    <property type="match status" value="1"/>
</dbReference>
<dbReference type="NCBIfam" id="NF002636">
    <property type="entry name" value="PRK02304.1-5"/>
    <property type="match status" value="1"/>
</dbReference>
<dbReference type="PANTHER" id="PTHR32315">
    <property type="entry name" value="ADENINE PHOSPHORIBOSYLTRANSFERASE"/>
    <property type="match status" value="1"/>
</dbReference>
<dbReference type="PANTHER" id="PTHR32315:SF3">
    <property type="entry name" value="ADENINE PHOSPHORIBOSYLTRANSFERASE"/>
    <property type="match status" value="1"/>
</dbReference>
<dbReference type="Pfam" id="PF00156">
    <property type="entry name" value="Pribosyltran"/>
    <property type="match status" value="1"/>
</dbReference>
<dbReference type="SUPFAM" id="SSF53271">
    <property type="entry name" value="PRTase-like"/>
    <property type="match status" value="1"/>
</dbReference>
<dbReference type="PROSITE" id="PS00103">
    <property type="entry name" value="PUR_PYR_PR_TRANSFER"/>
    <property type="match status" value="1"/>
</dbReference>
<organism>
    <name type="scientific">Exiguobacterium sibiricum (strain DSM 17290 / CCUG 55495 / CIP 109462 / JCM 13490 / 255-15)</name>
    <dbReference type="NCBI Taxonomy" id="262543"/>
    <lineage>
        <taxon>Bacteria</taxon>
        <taxon>Bacillati</taxon>
        <taxon>Bacillota</taxon>
        <taxon>Bacilli</taxon>
        <taxon>Bacillales</taxon>
        <taxon>Bacillales Family XII. Incertae Sedis</taxon>
        <taxon>Exiguobacterium</taxon>
    </lineage>
</organism>
<protein>
    <recommendedName>
        <fullName evidence="1">Adenine phosphoribosyltransferase</fullName>
        <shortName evidence="1">APRT</shortName>
        <ecNumber evidence="1">2.4.2.7</ecNumber>
    </recommendedName>
</protein>
<accession>B1YJG1</accession>
<comment type="function">
    <text evidence="1">Catalyzes a salvage reaction resulting in the formation of AMP, that is energically less costly than de novo synthesis.</text>
</comment>
<comment type="catalytic activity">
    <reaction evidence="1">
        <text>AMP + diphosphate = 5-phospho-alpha-D-ribose 1-diphosphate + adenine</text>
        <dbReference type="Rhea" id="RHEA:16609"/>
        <dbReference type="ChEBI" id="CHEBI:16708"/>
        <dbReference type="ChEBI" id="CHEBI:33019"/>
        <dbReference type="ChEBI" id="CHEBI:58017"/>
        <dbReference type="ChEBI" id="CHEBI:456215"/>
        <dbReference type="EC" id="2.4.2.7"/>
    </reaction>
</comment>
<comment type="pathway">
    <text evidence="1">Purine metabolism; AMP biosynthesis via salvage pathway; AMP from adenine: step 1/1.</text>
</comment>
<comment type="subunit">
    <text evidence="1">Homodimer.</text>
</comment>
<comment type="subcellular location">
    <subcellularLocation>
        <location evidence="1">Cytoplasm</location>
    </subcellularLocation>
</comment>
<comment type="similarity">
    <text evidence="1">Belongs to the purine/pyrimidine phosphoribosyltransferase family.</text>
</comment>
<sequence length="172" mass="18853">MEFKQHIKEVENWPKEGISFKDITSLMQNGPAYKQSVDALIDYARKQGADVIAGPEARGFVVGCPAAYAMEIGFVPVRKEGKLPRETVRVEYGLEYGKDVLTMHHDAIQPGQRVVILDDLLATGGTIEATIKMIEQLGGTVAGIGFLIELDGLGGREKLEGYDILSLIRYAD</sequence>
<evidence type="ECO:0000255" key="1">
    <source>
        <dbReference type="HAMAP-Rule" id="MF_00004"/>
    </source>
</evidence>